<comment type="subcellular location">
    <subcellularLocation>
        <location evidence="1">Secreted</location>
    </subcellularLocation>
</comment>
<comment type="tissue specificity">
    <text>Expressed by the venom duct.</text>
</comment>
<comment type="domain">
    <text evidence="1">The presence of a 'disulfide through disulfide knot' structurally defines this protein as a knottin.</text>
</comment>
<comment type="domain">
    <text>The cysteine framework is VI/VII (C-C-CC-C-C).</text>
</comment>
<comment type="similarity">
    <text evidence="4">Belongs to the conotoxin O1 superfamily.</text>
</comment>
<proteinExistence type="evidence at transcript level"/>
<reference key="1">
    <citation type="journal article" date="1999" name="Proc. Natl. Acad. Sci. U.S.A.">
        <title>Molecular genetics of ecological diversification: duplication and rapid evolution of toxin genes of the venomous gastropod Conus.</title>
        <authorList>
            <person name="Duda T.F. Jr."/>
            <person name="Palumbi S.R."/>
        </authorList>
    </citation>
    <scope>NUCLEOTIDE SEQUENCE [MRNA]</scope>
    <source>
        <tissue>Venom duct</tissue>
    </source>
</reference>
<reference key="2">
    <citation type="journal article" date="2004" name="Proc. R. Soc. B">
        <title>Gene expression and feeding ecology: evolution of piscivory in the venomous gastropod genus Conus.</title>
        <authorList>
            <person name="Duda T.F. Jr."/>
            <person name="Palumbi S.R."/>
        </authorList>
    </citation>
    <scope>NUCLEOTIDE SEQUENCE [MRNA]</scope>
    <source>
        <tissue>Venom duct</tissue>
    </source>
</reference>
<accession>Q9UA86</accession>
<sequence length="74" mass="8052">VLIIAVLFLTACQLTTAETSSRGEQKHRAPRSTDKNSRMTKRCTPGGEACDATTNCCFLTCNLATNKCRSPNFP</sequence>
<protein>
    <recommendedName>
        <fullName>Conotoxin AbVIL</fullName>
    </recommendedName>
</protein>
<dbReference type="EMBL" id="AF090006">
    <property type="protein sequence ID" value="AAD48260.1"/>
    <property type="molecule type" value="mRNA"/>
</dbReference>
<dbReference type="SMR" id="Q9UA86"/>
<dbReference type="ConoServer" id="982">
    <property type="toxin name" value="ABVIL precursor"/>
</dbReference>
<dbReference type="GO" id="GO:0005576">
    <property type="term" value="C:extracellular region"/>
    <property type="evidence" value="ECO:0007669"/>
    <property type="project" value="UniProtKB-SubCell"/>
</dbReference>
<dbReference type="GO" id="GO:0008200">
    <property type="term" value="F:ion channel inhibitor activity"/>
    <property type="evidence" value="ECO:0007669"/>
    <property type="project" value="InterPro"/>
</dbReference>
<dbReference type="GO" id="GO:0090729">
    <property type="term" value="F:toxin activity"/>
    <property type="evidence" value="ECO:0007669"/>
    <property type="project" value="UniProtKB-KW"/>
</dbReference>
<dbReference type="InterPro" id="IPR004214">
    <property type="entry name" value="Conotoxin"/>
</dbReference>
<dbReference type="Pfam" id="PF02950">
    <property type="entry name" value="Conotoxin"/>
    <property type="match status" value="1"/>
</dbReference>
<evidence type="ECO:0000250" key="1"/>
<evidence type="ECO:0000255" key="2"/>
<evidence type="ECO:0000256" key="3">
    <source>
        <dbReference type="SAM" id="MobiDB-lite"/>
    </source>
</evidence>
<evidence type="ECO:0000305" key="4"/>
<name>O16L_CONAB</name>
<organism>
    <name type="scientific">Conus abbreviatus</name>
    <name type="common">Abbreviated cone</name>
    <name type="synonym">Miliariconus abbreviatus</name>
    <dbReference type="NCBI Taxonomy" id="100123"/>
    <lineage>
        <taxon>Eukaryota</taxon>
        <taxon>Metazoa</taxon>
        <taxon>Spiralia</taxon>
        <taxon>Lophotrochozoa</taxon>
        <taxon>Mollusca</taxon>
        <taxon>Gastropoda</taxon>
        <taxon>Caenogastropoda</taxon>
        <taxon>Neogastropoda</taxon>
        <taxon>Conoidea</taxon>
        <taxon>Conidae</taxon>
        <taxon>Conus</taxon>
        <taxon>Virroconus</taxon>
    </lineage>
</organism>
<feature type="signal peptide" evidence="2">
    <location>
        <begin position="1" status="less than"/>
        <end position="17"/>
    </location>
</feature>
<feature type="propeptide" id="PRO_0000392132" evidence="1">
    <location>
        <begin position="18"/>
        <end position="40"/>
    </location>
</feature>
<feature type="peptide" id="PRO_0000392133" description="Conotoxin AbVIL">
    <location>
        <begin position="43"/>
        <end position="74"/>
    </location>
</feature>
<feature type="region of interest" description="Disordered" evidence="3">
    <location>
        <begin position="17"/>
        <end position="41"/>
    </location>
</feature>
<feature type="compositionally biased region" description="Basic and acidic residues" evidence="3">
    <location>
        <begin position="21"/>
        <end position="37"/>
    </location>
</feature>
<feature type="disulfide bond" evidence="1">
    <location>
        <begin position="43"/>
        <end position="57"/>
    </location>
</feature>
<feature type="disulfide bond" evidence="1">
    <location>
        <begin position="50"/>
        <end position="61"/>
    </location>
</feature>
<feature type="disulfide bond" evidence="1">
    <location>
        <begin position="56"/>
        <end position="68"/>
    </location>
</feature>
<feature type="non-terminal residue">
    <location>
        <position position="1"/>
    </location>
</feature>
<keyword id="KW-0165">Cleavage on pair of basic residues</keyword>
<keyword id="KW-1015">Disulfide bond</keyword>
<keyword id="KW-0960">Knottin</keyword>
<keyword id="KW-0964">Secreted</keyword>
<keyword id="KW-0732">Signal</keyword>
<keyword id="KW-0800">Toxin</keyword>